<protein>
    <recommendedName>
        <fullName evidence="1">Trans-aconitate 2-methyltransferase</fullName>
        <ecNumber evidence="1">2.1.1.144</ecNumber>
    </recommendedName>
</protein>
<proteinExistence type="inferred from homology"/>
<name>TAM_STRCO</name>
<comment type="function">
    <text evidence="1">Catalyzes the S-adenosylmethionine monomethyl esterification of trans-aconitate.</text>
</comment>
<comment type="catalytic activity">
    <reaction evidence="1">
        <text>trans-aconitate + S-adenosyl-L-methionine = (E)-3-(methoxycarbonyl)pent-2-enedioate + S-adenosyl-L-homocysteine</text>
        <dbReference type="Rhea" id="RHEA:14969"/>
        <dbReference type="ChEBI" id="CHEBI:15708"/>
        <dbReference type="ChEBI" id="CHEBI:57470"/>
        <dbReference type="ChEBI" id="CHEBI:57856"/>
        <dbReference type="ChEBI" id="CHEBI:59789"/>
        <dbReference type="EC" id="2.1.1.144"/>
    </reaction>
</comment>
<comment type="subcellular location">
    <subcellularLocation>
        <location evidence="1">Cytoplasm</location>
    </subcellularLocation>
</comment>
<comment type="similarity">
    <text evidence="1">Belongs to the methyltransferase superfamily. Tam family.</text>
</comment>
<sequence>MPATAPTWDPAQYLRHAGHRARPFTDLLARIPDLPADPPRIADLGCGPGNVTVLLADRWPTARITGYDNSPRMLERARQYAGPTSGGGHLDFAPADARSWTPDEPCDLLVSNATLQWVPGHADLFPGWIDRLAPGGTLALQVPGNFDAPSHRLMRELADSRRWRERLAGVLRHDDAVLTPEGYLAHLTAAGCTADVWETTYVHLLPGDDAVLDWVRGTGLRPVLDALDGDPAARDAFVDEYRAVLRAAYPAQAHGTPFPFRRVFAVARKPEGSGGSGGSGGSAGSAGCAGSGGSVGPAGEAGR</sequence>
<dbReference type="EC" id="2.1.1.144" evidence="1"/>
<dbReference type="EMBL" id="AL939115">
    <property type="protein sequence ID" value="CAB95925.1"/>
    <property type="molecule type" value="Genomic_DNA"/>
</dbReference>
<dbReference type="RefSeq" id="NP_627349.1">
    <property type="nucleotide sequence ID" value="NC_003888.3"/>
</dbReference>
<dbReference type="RefSeq" id="WP_011028784.1">
    <property type="nucleotide sequence ID" value="NZ_VNID01000013.1"/>
</dbReference>
<dbReference type="SMR" id="Q9K3T2"/>
<dbReference type="FunCoup" id="Q9K3T2">
    <property type="interactions" value="4"/>
</dbReference>
<dbReference type="STRING" id="100226.gene:17760749"/>
<dbReference type="PaxDb" id="100226-SCO3132"/>
<dbReference type="KEGG" id="sco:SCO3132"/>
<dbReference type="PATRIC" id="fig|100226.15.peg.3196"/>
<dbReference type="eggNOG" id="COG4106">
    <property type="taxonomic scope" value="Bacteria"/>
</dbReference>
<dbReference type="HOGENOM" id="CLU_037990_5_2_11"/>
<dbReference type="InParanoid" id="Q9K3T2"/>
<dbReference type="OrthoDB" id="9795085at2"/>
<dbReference type="PhylomeDB" id="Q9K3T2"/>
<dbReference type="BRENDA" id="2.1.1.144">
    <property type="organism ID" value="5998"/>
</dbReference>
<dbReference type="Proteomes" id="UP000001973">
    <property type="component" value="Chromosome"/>
</dbReference>
<dbReference type="GO" id="GO:0005737">
    <property type="term" value="C:cytoplasm"/>
    <property type="evidence" value="ECO:0007669"/>
    <property type="project" value="UniProtKB-SubCell"/>
</dbReference>
<dbReference type="GO" id="GO:0030798">
    <property type="term" value="F:trans-aconitate 2-methyltransferase activity"/>
    <property type="evidence" value="ECO:0007669"/>
    <property type="project" value="UniProtKB-UniRule"/>
</dbReference>
<dbReference type="GO" id="GO:0017000">
    <property type="term" value="P:antibiotic biosynthetic process"/>
    <property type="evidence" value="ECO:0007669"/>
    <property type="project" value="UniProtKB-ARBA"/>
</dbReference>
<dbReference type="GO" id="GO:0032259">
    <property type="term" value="P:methylation"/>
    <property type="evidence" value="ECO:0007669"/>
    <property type="project" value="UniProtKB-KW"/>
</dbReference>
<dbReference type="CDD" id="cd02440">
    <property type="entry name" value="AdoMet_MTases"/>
    <property type="match status" value="1"/>
</dbReference>
<dbReference type="Gene3D" id="1.10.150.290">
    <property type="entry name" value="S-adenosyl-L-methionine-dependent methyltransferases"/>
    <property type="match status" value="1"/>
</dbReference>
<dbReference type="Gene3D" id="3.40.50.150">
    <property type="entry name" value="Vaccinia Virus protein VP39"/>
    <property type="match status" value="1"/>
</dbReference>
<dbReference type="HAMAP" id="MF_00560">
    <property type="entry name" value="Tran_acon_Me_trans"/>
    <property type="match status" value="1"/>
</dbReference>
<dbReference type="InterPro" id="IPR041698">
    <property type="entry name" value="Methyltransf_25"/>
</dbReference>
<dbReference type="InterPro" id="IPR029063">
    <property type="entry name" value="SAM-dependent_MTases_sf"/>
</dbReference>
<dbReference type="InterPro" id="IPR023506">
    <property type="entry name" value="Trans-aconitate_MeTrfase"/>
</dbReference>
<dbReference type="InterPro" id="IPR023149">
    <property type="entry name" value="Trans_acon_MeTrfase_C"/>
</dbReference>
<dbReference type="NCBIfam" id="NF010703">
    <property type="entry name" value="PRK14103.1"/>
    <property type="match status" value="1"/>
</dbReference>
<dbReference type="PANTHER" id="PTHR43861:SF1">
    <property type="entry name" value="TRANS-ACONITATE 2-METHYLTRANSFERASE"/>
    <property type="match status" value="1"/>
</dbReference>
<dbReference type="PANTHER" id="PTHR43861">
    <property type="entry name" value="TRANS-ACONITATE 2-METHYLTRANSFERASE-RELATED"/>
    <property type="match status" value="1"/>
</dbReference>
<dbReference type="Pfam" id="PF13649">
    <property type="entry name" value="Methyltransf_25"/>
    <property type="match status" value="1"/>
</dbReference>
<dbReference type="SUPFAM" id="SSF53335">
    <property type="entry name" value="S-adenosyl-L-methionine-dependent methyltransferases"/>
    <property type="match status" value="1"/>
</dbReference>
<gene>
    <name evidence="1" type="primary">tam</name>
    <name type="ordered locus">SCO3132</name>
    <name type="ORF">SCE66.11c</name>
</gene>
<reference key="1">
    <citation type="journal article" date="2002" name="Nature">
        <title>Complete genome sequence of the model actinomycete Streptomyces coelicolor A3(2).</title>
        <authorList>
            <person name="Bentley S.D."/>
            <person name="Chater K.F."/>
            <person name="Cerdeno-Tarraga A.-M."/>
            <person name="Challis G.L."/>
            <person name="Thomson N.R."/>
            <person name="James K.D."/>
            <person name="Harris D.E."/>
            <person name="Quail M.A."/>
            <person name="Kieser H."/>
            <person name="Harper D."/>
            <person name="Bateman A."/>
            <person name="Brown S."/>
            <person name="Chandra G."/>
            <person name="Chen C.W."/>
            <person name="Collins M."/>
            <person name="Cronin A."/>
            <person name="Fraser A."/>
            <person name="Goble A."/>
            <person name="Hidalgo J."/>
            <person name="Hornsby T."/>
            <person name="Howarth S."/>
            <person name="Huang C.-H."/>
            <person name="Kieser T."/>
            <person name="Larke L."/>
            <person name="Murphy L.D."/>
            <person name="Oliver K."/>
            <person name="O'Neil S."/>
            <person name="Rabbinowitsch E."/>
            <person name="Rajandream M.A."/>
            <person name="Rutherford K.M."/>
            <person name="Rutter S."/>
            <person name="Seeger K."/>
            <person name="Saunders D."/>
            <person name="Sharp S."/>
            <person name="Squares R."/>
            <person name="Squares S."/>
            <person name="Taylor K."/>
            <person name="Warren T."/>
            <person name="Wietzorrek A."/>
            <person name="Woodward J.R."/>
            <person name="Barrell B.G."/>
            <person name="Parkhill J."/>
            <person name="Hopwood D.A."/>
        </authorList>
    </citation>
    <scope>NUCLEOTIDE SEQUENCE [LARGE SCALE GENOMIC DNA]</scope>
    <source>
        <strain>ATCC BAA-471 / A3(2) / M145</strain>
    </source>
</reference>
<accession>Q9K3T2</accession>
<organism>
    <name type="scientific">Streptomyces coelicolor (strain ATCC BAA-471 / A3(2) / M145)</name>
    <dbReference type="NCBI Taxonomy" id="100226"/>
    <lineage>
        <taxon>Bacteria</taxon>
        <taxon>Bacillati</taxon>
        <taxon>Actinomycetota</taxon>
        <taxon>Actinomycetes</taxon>
        <taxon>Kitasatosporales</taxon>
        <taxon>Streptomycetaceae</taxon>
        <taxon>Streptomyces</taxon>
        <taxon>Streptomyces albidoflavus group</taxon>
    </lineage>
</organism>
<keyword id="KW-0963">Cytoplasm</keyword>
<keyword id="KW-0489">Methyltransferase</keyword>
<keyword id="KW-1185">Reference proteome</keyword>
<keyword id="KW-0949">S-adenosyl-L-methionine</keyword>
<keyword id="KW-0808">Transferase</keyword>
<evidence type="ECO:0000255" key="1">
    <source>
        <dbReference type="HAMAP-Rule" id="MF_00560"/>
    </source>
</evidence>
<evidence type="ECO:0000256" key="2">
    <source>
        <dbReference type="SAM" id="MobiDB-lite"/>
    </source>
</evidence>
<feature type="chain" id="PRO_0000218087" description="Trans-aconitate 2-methyltransferase">
    <location>
        <begin position="1"/>
        <end position="303"/>
    </location>
</feature>
<feature type="region of interest" description="Disordered" evidence="2">
    <location>
        <begin position="271"/>
        <end position="303"/>
    </location>
</feature>
<feature type="compositionally biased region" description="Gly residues" evidence="2">
    <location>
        <begin position="272"/>
        <end position="303"/>
    </location>
</feature>